<protein>
    <recommendedName>
        <fullName evidence="1">Putative pre-16S rRNA nuclease</fullName>
        <ecNumber evidence="1">3.1.-.-</ecNumber>
    </recommendedName>
</protein>
<name>YQGF_PICP2</name>
<feature type="chain" id="PRO_1000131080" description="Putative pre-16S rRNA nuclease">
    <location>
        <begin position="1"/>
        <end position="144"/>
    </location>
</feature>
<accession>B1XJ08</accession>
<evidence type="ECO:0000255" key="1">
    <source>
        <dbReference type="HAMAP-Rule" id="MF_00651"/>
    </source>
</evidence>
<comment type="function">
    <text evidence="1">Could be a nuclease involved in processing of the 5'-end of pre-16S rRNA.</text>
</comment>
<comment type="subcellular location">
    <subcellularLocation>
        <location evidence="1">Cytoplasm</location>
    </subcellularLocation>
</comment>
<comment type="similarity">
    <text evidence="1">Belongs to the YqgF nuclease family.</text>
</comment>
<proteinExistence type="inferred from homology"/>
<sequence>MKPVAALGLDIGRKRIGVAGCDGLGLLATALTTIQRTTLEADLAAIAHWIEQRHIQVLVVGLPYAMDGSLGKQAKQTQKFARKLAEAFGLPIEYVDERLTSVEAENQLKAEKQYDRQQKGLVDQRAAQIILQQWLETRQCASKP</sequence>
<reference key="1">
    <citation type="submission" date="2008-02" db="EMBL/GenBank/DDBJ databases">
        <title>Complete sequence of Synechococcus sp. PCC 7002.</title>
        <authorList>
            <person name="Li T."/>
            <person name="Zhao J."/>
            <person name="Zhao C."/>
            <person name="Liu Z."/>
            <person name="Zhao F."/>
            <person name="Marquardt J."/>
            <person name="Nomura C.T."/>
            <person name="Persson S."/>
            <person name="Detter J.C."/>
            <person name="Richardson P.M."/>
            <person name="Lanz C."/>
            <person name="Schuster S.C."/>
            <person name="Wang J."/>
            <person name="Li S."/>
            <person name="Huang X."/>
            <person name="Cai T."/>
            <person name="Yu Z."/>
            <person name="Luo J."/>
            <person name="Zhao J."/>
            <person name="Bryant D.A."/>
        </authorList>
    </citation>
    <scope>NUCLEOTIDE SEQUENCE [LARGE SCALE GENOMIC DNA]</scope>
    <source>
        <strain>ATCC 27264 / PCC 7002 / PR-6</strain>
    </source>
</reference>
<gene>
    <name type="ordered locus">SYNPCC7002_A0946</name>
</gene>
<keyword id="KW-0963">Cytoplasm</keyword>
<keyword id="KW-0378">Hydrolase</keyword>
<keyword id="KW-0540">Nuclease</keyword>
<keyword id="KW-1185">Reference proteome</keyword>
<keyword id="KW-0690">Ribosome biogenesis</keyword>
<organism>
    <name type="scientific">Picosynechococcus sp. (strain ATCC 27264 / PCC 7002 / PR-6)</name>
    <name type="common">Agmenellum quadruplicatum</name>
    <dbReference type="NCBI Taxonomy" id="32049"/>
    <lineage>
        <taxon>Bacteria</taxon>
        <taxon>Bacillati</taxon>
        <taxon>Cyanobacteriota</taxon>
        <taxon>Cyanophyceae</taxon>
        <taxon>Oscillatoriophycideae</taxon>
        <taxon>Chroococcales</taxon>
        <taxon>Geminocystaceae</taxon>
        <taxon>Picosynechococcus</taxon>
    </lineage>
</organism>
<dbReference type="EC" id="3.1.-.-" evidence="1"/>
<dbReference type="EMBL" id="CP000951">
    <property type="protein sequence ID" value="ACA98950.1"/>
    <property type="molecule type" value="Genomic_DNA"/>
</dbReference>
<dbReference type="SMR" id="B1XJ08"/>
<dbReference type="STRING" id="32049.SYNPCC7002_A0946"/>
<dbReference type="KEGG" id="syp:SYNPCC7002_A0946"/>
<dbReference type="eggNOG" id="COG0816">
    <property type="taxonomic scope" value="Bacteria"/>
</dbReference>
<dbReference type="HOGENOM" id="CLU_098240_3_1_3"/>
<dbReference type="Proteomes" id="UP000001688">
    <property type="component" value="Chromosome"/>
</dbReference>
<dbReference type="GO" id="GO:0005829">
    <property type="term" value="C:cytosol"/>
    <property type="evidence" value="ECO:0007669"/>
    <property type="project" value="TreeGrafter"/>
</dbReference>
<dbReference type="GO" id="GO:0004518">
    <property type="term" value="F:nuclease activity"/>
    <property type="evidence" value="ECO:0007669"/>
    <property type="project" value="UniProtKB-KW"/>
</dbReference>
<dbReference type="GO" id="GO:0000967">
    <property type="term" value="P:rRNA 5'-end processing"/>
    <property type="evidence" value="ECO:0007669"/>
    <property type="project" value="UniProtKB-UniRule"/>
</dbReference>
<dbReference type="CDD" id="cd16964">
    <property type="entry name" value="YqgF"/>
    <property type="match status" value="1"/>
</dbReference>
<dbReference type="Gene3D" id="3.30.420.140">
    <property type="entry name" value="YqgF/RNase H-like domain"/>
    <property type="match status" value="1"/>
</dbReference>
<dbReference type="HAMAP" id="MF_00651">
    <property type="entry name" value="Nuclease_YqgF"/>
    <property type="match status" value="1"/>
</dbReference>
<dbReference type="InterPro" id="IPR012337">
    <property type="entry name" value="RNaseH-like_sf"/>
</dbReference>
<dbReference type="InterPro" id="IPR005227">
    <property type="entry name" value="YqgF"/>
</dbReference>
<dbReference type="InterPro" id="IPR006641">
    <property type="entry name" value="YqgF/RNaseH-like_dom"/>
</dbReference>
<dbReference type="InterPro" id="IPR037027">
    <property type="entry name" value="YqgF/RNaseH-like_dom_sf"/>
</dbReference>
<dbReference type="NCBIfam" id="TIGR00250">
    <property type="entry name" value="RNAse_H_YqgF"/>
    <property type="match status" value="1"/>
</dbReference>
<dbReference type="PANTHER" id="PTHR33317">
    <property type="entry name" value="POLYNUCLEOTIDYL TRANSFERASE, RIBONUCLEASE H-LIKE SUPERFAMILY PROTEIN"/>
    <property type="match status" value="1"/>
</dbReference>
<dbReference type="PANTHER" id="PTHR33317:SF4">
    <property type="entry name" value="POLYNUCLEOTIDYL TRANSFERASE, RIBONUCLEASE H-LIKE SUPERFAMILY PROTEIN"/>
    <property type="match status" value="1"/>
</dbReference>
<dbReference type="Pfam" id="PF03652">
    <property type="entry name" value="RuvX"/>
    <property type="match status" value="1"/>
</dbReference>
<dbReference type="SMART" id="SM00732">
    <property type="entry name" value="YqgFc"/>
    <property type="match status" value="1"/>
</dbReference>
<dbReference type="SUPFAM" id="SSF53098">
    <property type="entry name" value="Ribonuclease H-like"/>
    <property type="match status" value="1"/>
</dbReference>